<organism>
    <name type="scientific">Haemophilus ducreyi (strain 35000HP / ATCC 700724)</name>
    <dbReference type="NCBI Taxonomy" id="233412"/>
    <lineage>
        <taxon>Bacteria</taxon>
        <taxon>Pseudomonadati</taxon>
        <taxon>Pseudomonadota</taxon>
        <taxon>Gammaproteobacteria</taxon>
        <taxon>Pasteurellales</taxon>
        <taxon>Pasteurellaceae</taxon>
        <taxon>Haemophilus</taxon>
    </lineage>
</organism>
<protein>
    <recommendedName>
        <fullName evidence="1">Triosephosphate isomerase</fullName>
        <shortName evidence="1">TIM</shortName>
        <shortName evidence="1">TPI</shortName>
        <ecNumber evidence="1">5.3.1.1</ecNumber>
    </recommendedName>
    <alternativeName>
        <fullName evidence="1">Triose-phosphate isomerase</fullName>
    </alternativeName>
</protein>
<reference key="1">
    <citation type="submission" date="2003-06" db="EMBL/GenBank/DDBJ databases">
        <title>The complete genome sequence of Haemophilus ducreyi.</title>
        <authorList>
            <person name="Munson R.S. Jr."/>
            <person name="Ray W.C."/>
            <person name="Mahairas G."/>
            <person name="Sabo P."/>
            <person name="Mungur R."/>
            <person name="Johnson L."/>
            <person name="Nguyen D."/>
            <person name="Wang J."/>
            <person name="Forst C."/>
            <person name="Hood L."/>
        </authorList>
    </citation>
    <scope>NUCLEOTIDE SEQUENCE [LARGE SCALE GENOMIC DNA]</scope>
    <source>
        <strain>35000HP / ATCC 700724</strain>
    </source>
</reference>
<feature type="chain" id="PRO_0000090225" description="Triosephosphate isomerase">
    <location>
        <begin position="1"/>
        <end position="256"/>
    </location>
</feature>
<feature type="active site" description="Electrophile" evidence="1">
    <location>
        <position position="97"/>
    </location>
</feature>
<feature type="active site" description="Proton acceptor" evidence="1">
    <location>
        <position position="169"/>
    </location>
</feature>
<feature type="binding site" evidence="1">
    <location>
        <begin position="10"/>
        <end position="12"/>
    </location>
    <ligand>
        <name>substrate</name>
    </ligand>
</feature>
<feature type="binding site" evidence="1">
    <location>
        <position position="175"/>
    </location>
    <ligand>
        <name>substrate</name>
    </ligand>
</feature>
<feature type="binding site" evidence="1">
    <location>
        <position position="214"/>
    </location>
    <ligand>
        <name>substrate</name>
    </ligand>
</feature>
<feature type="binding site" evidence="1">
    <location>
        <begin position="235"/>
        <end position="236"/>
    </location>
    <ligand>
        <name>substrate</name>
    </ligand>
</feature>
<keyword id="KW-0963">Cytoplasm</keyword>
<keyword id="KW-0312">Gluconeogenesis</keyword>
<keyword id="KW-0324">Glycolysis</keyword>
<keyword id="KW-0413">Isomerase</keyword>
<keyword id="KW-1185">Reference proteome</keyword>
<gene>
    <name evidence="1" type="primary">tpiA</name>
    <name type="ordered locus">HD_0762</name>
</gene>
<comment type="function">
    <text evidence="1">Involved in the gluconeogenesis. Catalyzes stereospecifically the conversion of dihydroxyacetone phosphate (DHAP) to D-glyceraldehyde-3-phosphate (G3P).</text>
</comment>
<comment type="catalytic activity">
    <reaction evidence="1">
        <text>D-glyceraldehyde 3-phosphate = dihydroxyacetone phosphate</text>
        <dbReference type="Rhea" id="RHEA:18585"/>
        <dbReference type="ChEBI" id="CHEBI:57642"/>
        <dbReference type="ChEBI" id="CHEBI:59776"/>
        <dbReference type="EC" id="5.3.1.1"/>
    </reaction>
</comment>
<comment type="pathway">
    <text evidence="1">Carbohydrate biosynthesis; gluconeogenesis.</text>
</comment>
<comment type="pathway">
    <text evidence="1">Carbohydrate degradation; glycolysis; D-glyceraldehyde 3-phosphate from glycerone phosphate: step 1/1.</text>
</comment>
<comment type="subunit">
    <text evidence="1">Homodimer.</text>
</comment>
<comment type="subcellular location">
    <subcellularLocation>
        <location evidence="1">Cytoplasm</location>
    </subcellularLocation>
</comment>
<comment type="similarity">
    <text evidence="1">Belongs to the triosephosphate isomerase family.</text>
</comment>
<proteinExistence type="inferred from homology"/>
<sequence>MARRPLVMGNWKLNGSKAFTQQLIAELKTELAEITGCDVAIAPPVMYLSEAEIALAGQSTIRLGAQNVDINTQGAFTGDISTAMLQEFCAKYIIIGHSERRTYHAESDQFIAKKFAALKTAGLTPVLCIGETEAENEAGQTQQVCARQIDAIINSLGVEAFNQAVIAYEPIWAIGTGKSATPAQAQAVHAFIRQHIAEKSQAVADQLIIQYGGSVNDTNAAELFSQPDIDGALVGGASLKATAFAEIVKAAEKAKA</sequence>
<dbReference type="EC" id="5.3.1.1" evidence="1"/>
<dbReference type="EMBL" id="AE017143">
    <property type="protein sequence ID" value="AAP95669.1"/>
    <property type="molecule type" value="Genomic_DNA"/>
</dbReference>
<dbReference type="RefSeq" id="WP_010944720.1">
    <property type="nucleotide sequence ID" value="NC_002940.2"/>
</dbReference>
<dbReference type="SMR" id="Q7VN27"/>
<dbReference type="STRING" id="233412.HD_0762"/>
<dbReference type="KEGG" id="hdu:HD_0762"/>
<dbReference type="eggNOG" id="COG0149">
    <property type="taxonomic scope" value="Bacteria"/>
</dbReference>
<dbReference type="HOGENOM" id="CLU_024251_2_1_6"/>
<dbReference type="OrthoDB" id="9809429at2"/>
<dbReference type="UniPathway" id="UPA00109">
    <property type="reaction ID" value="UER00189"/>
</dbReference>
<dbReference type="UniPathway" id="UPA00138"/>
<dbReference type="Proteomes" id="UP000001022">
    <property type="component" value="Chromosome"/>
</dbReference>
<dbReference type="GO" id="GO:0005829">
    <property type="term" value="C:cytosol"/>
    <property type="evidence" value="ECO:0007669"/>
    <property type="project" value="TreeGrafter"/>
</dbReference>
<dbReference type="GO" id="GO:0004807">
    <property type="term" value="F:triose-phosphate isomerase activity"/>
    <property type="evidence" value="ECO:0007669"/>
    <property type="project" value="UniProtKB-UniRule"/>
</dbReference>
<dbReference type="GO" id="GO:0006094">
    <property type="term" value="P:gluconeogenesis"/>
    <property type="evidence" value="ECO:0007669"/>
    <property type="project" value="UniProtKB-UniRule"/>
</dbReference>
<dbReference type="GO" id="GO:0046166">
    <property type="term" value="P:glyceraldehyde-3-phosphate biosynthetic process"/>
    <property type="evidence" value="ECO:0007669"/>
    <property type="project" value="TreeGrafter"/>
</dbReference>
<dbReference type="GO" id="GO:0019563">
    <property type="term" value="P:glycerol catabolic process"/>
    <property type="evidence" value="ECO:0007669"/>
    <property type="project" value="TreeGrafter"/>
</dbReference>
<dbReference type="GO" id="GO:0006096">
    <property type="term" value="P:glycolytic process"/>
    <property type="evidence" value="ECO:0007669"/>
    <property type="project" value="UniProtKB-UniRule"/>
</dbReference>
<dbReference type="CDD" id="cd00311">
    <property type="entry name" value="TIM"/>
    <property type="match status" value="1"/>
</dbReference>
<dbReference type="FunFam" id="3.20.20.70:FF:000020">
    <property type="entry name" value="Triosephosphate isomerase"/>
    <property type="match status" value="1"/>
</dbReference>
<dbReference type="Gene3D" id="3.20.20.70">
    <property type="entry name" value="Aldolase class I"/>
    <property type="match status" value="1"/>
</dbReference>
<dbReference type="HAMAP" id="MF_00147_B">
    <property type="entry name" value="TIM_B"/>
    <property type="match status" value="1"/>
</dbReference>
<dbReference type="InterPro" id="IPR013785">
    <property type="entry name" value="Aldolase_TIM"/>
</dbReference>
<dbReference type="InterPro" id="IPR035990">
    <property type="entry name" value="TIM_sf"/>
</dbReference>
<dbReference type="InterPro" id="IPR022896">
    <property type="entry name" value="TrioseP_Isoase_bac/euk"/>
</dbReference>
<dbReference type="InterPro" id="IPR000652">
    <property type="entry name" value="Triosephosphate_isomerase"/>
</dbReference>
<dbReference type="InterPro" id="IPR020861">
    <property type="entry name" value="Triosephosphate_isomerase_AS"/>
</dbReference>
<dbReference type="NCBIfam" id="TIGR00419">
    <property type="entry name" value="tim"/>
    <property type="match status" value="1"/>
</dbReference>
<dbReference type="PANTHER" id="PTHR21139">
    <property type="entry name" value="TRIOSEPHOSPHATE ISOMERASE"/>
    <property type="match status" value="1"/>
</dbReference>
<dbReference type="PANTHER" id="PTHR21139:SF42">
    <property type="entry name" value="TRIOSEPHOSPHATE ISOMERASE"/>
    <property type="match status" value="1"/>
</dbReference>
<dbReference type="Pfam" id="PF00121">
    <property type="entry name" value="TIM"/>
    <property type="match status" value="1"/>
</dbReference>
<dbReference type="SUPFAM" id="SSF51351">
    <property type="entry name" value="Triosephosphate isomerase (TIM)"/>
    <property type="match status" value="1"/>
</dbReference>
<dbReference type="PROSITE" id="PS00171">
    <property type="entry name" value="TIM_1"/>
    <property type="match status" value="1"/>
</dbReference>
<dbReference type="PROSITE" id="PS51440">
    <property type="entry name" value="TIM_2"/>
    <property type="match status" value="1"/>
</dbReference>
<name>TPIS_HAEDU</name>
<evidence type="ECO:0000255" key="1">
    <source>
        <dbReference type="HAMAP-Rule" id="MF_00147"/>
    </source>
</evidence>
<accession>Q7VN27</accession>